<proteinExistence type="inferred from homology"/>
<organism>
    <name type="scientific">Xanthomonas axonopodis pv. citri (strain 306)</name>
    <dbReference type="NCBI Taxonomy" id="190486"/>
    <lineage>
        <taxon>Bacteria</taxon>
        <taxon>Pseudomonadati</taxon>
        <taxon>Pseudomonadota</taxon>
        <taxon>Gammaproteobacteria</taxon>
        <taxon>Lysobacterales</taxon>
        <taxon>Lysobacteraceae</taxon>
        <taxon>Xanthomonas</taxon>
    </lineage>
</organism>
<evidence type="ECO:0000255" key="1">
    <source>
        <dbReference type="HAMAP-Rule" id="MF_00303"/>
    </source>
</evidence>
<comment type="function">
    <text evidence="1">Involved in protein export. Acts as a chaperone by maintaining the newly synthesized protein in an open conformation. Functions as a peptidyl-prolyl cis-trans isomerase.</text>
</comment>
<comment type="catalytic activity">
    <reaction evidence="1">
        <text>[protein]-peptidylproline (omega=180) = [protein]-peptidylproline (omega=0)</text>
        <dbReference type="Rhea" id="RHEA:16237"/>
        <dbReference type="Rhea" id="RHEA-COMP:10747"/>
        <dbReference type="Rhea" id="RHEA-COMP:10748"/>
        <dbReference type="ChEBI" id="CHEBI:83833"/>
        <dbReference type="ChEBI" id="CHEBI:83834"/>
        <dbReference type="EC" id="5.2.1.8"/>
    </reaction>
</comment>
<comment type="subcellular location">
    <subcellularLocation>
        <location>Cytoplasm</location>
    </subcellularLocation>
    <text evidence="1">About half TF is bound to the ribosome near the polypeptide exit tunnel while the other half is free in the cytoplasm.</text>
</comment>
<comment type="domain">
    <text evidence="1">Consists of 3 domains; the N-terminus binds the ribosome, the middle domain has PPIase activity, while the C-terminus has intrinsic chaperone activity on its own.</text>
</comment>
<comment type="similarity">
    <text evidence="1">Belongs to the FKBP-type PPIase family. Tig subfamily.</text>
</comment>
<feature type="chain" id="PRO_0000179465" description="Trigger factor">
    <location>
        <begin position="1"/>
        <end position="430"/>
    </location>
</feature>
<feature type="domain" description="PPIase FKBP-type" evidence="1">
    <location>
        <begin position="157"/>
        <end position="242"/>
    </location>
</feature>
<keyword id="KW-0131">Cell cycle</keyword>
<keyword id="KW-0132">Cell division</keyword>
<keyword id="KW-0143">Chaperone</keyword>
<keyword id="KW-0963">Cytoplasm</keyword>
<keyword id="KW-0413">Isomerase</keyword>
<keyword id="KW-0697">Rotamase</keyword>
<reference key="1">
    <citation type="journal article" date="2002" name="Nature">
        <title>Comparison of the genomes of two Xanthomonas pathogens with differing host specificities.</title>
        <authorList>
            <person name="da Silva A.C.R."/>
            <person name="Ferro J.A."/>
            <person name="Reinach F.C."/>
            <person name="Farah C.S."/>
            <person name="Furlan L.R."/>
            <person name="Quaggio R.B."/>
            <person name="Monteiro-Vitorello C.B."/>
            <person name="Van Sluys M.A."/>
            <person name="Almeida N.F. Jr."/>
            <person name="Alves L.M.C."/>
            <person name="do Amaral A.M."/>
            <person name="Bertolini M.C."/>
            <person name="Camargo L.E.A."/>
            <person name="Camarotte G."/>
            <person name="Cannavan F."/>
            <person name="Cardozo J."/>
            <person name="Chambergo F."/>
            <person name="Ciapina L.P."/>
            <person name="Cicarelli R.M.B."/>
            <person name="Coutinho L.L."/>
            <person name="Cursino-Santos J.R."/>
            <person name="El-Dorry H."/>
            <person name="Faria J.B."/>
            <person name="Ferreira A.J.S."/>
            <person name="Ferreira R.C.C."/>
            <person name="Ferro M.I.T."/>
            <person name="Formighieri E.F."/>
            <person name="Franco M.C."/>
            <person name="Greggio C.C."/>
            <person name="Gruber A."/>
            <person name="Katsuyama A.M."/>
            <person name="Kishi L.T."/>
            <person name="Leite R.P."/>
            <person name="Lemos E.G.M."/>
            <person name="Lemos M.V.F."/>
            <person name="Locali E.C."/>
            <person name="Machado M.A."/>
            <person name="Madeira A.M.B.N."/>
            <person name="Martinez-Rossi N.M."/>
            <person name="Martins E.C."/>
            <person name="Meidanis J."/>
            <person name="Menck C.F.M."/>
            <person name="Miyaki C.Y."/>
            <person name="Moon D.H."/>
            <person name="Moreira L.M."/>
            <person name="Novo M.T.M."/>
            <person name="Okura V.K."/>
            <person name="Oliveira M.C."/>
            <person name="Oliveira V.R."/>
            <person name="Pereira H.A."/>
            <person name="Rossi A."/>
            <person name="Sena J.A.D."/>
            <person name="Silva C."/>
            <person name="de Souza R.F."/>
            <person name="Spinola L.A.F."/>
            <person name="Takita M.A."/>
            <person name="Tamura R.E."/>
            <person name="Teixeira E.C."/>
            <person name="Tezza R.I.D."/>
            <person name="Trindade dos Santos M."/>
            <person name="Truffi D."/>
            <person name="Tsai S.M."/>
            <person name="White F.F."/>
            <person name="Setubal J.C."/>
            <person name="Kitajima J.P."/>
        </authorList>
    </citation>
    <scope>NUCLEOTIDE SEQUENCE [LARGE SCALE GENOMIC DNA]</scope>
    <source>
        <strain>306</strain>
    </source>
</reference>
<gene>
    <name evidence="1" type="primary">tig</name>
    <name type="ordered locus">XAC1077</name>
</gene>
<protein>
    <recommendedName>
        <fullName evidence="1">Trigger factor</fullName>
        <shortName evidence="1">TF</shortName>
        <ecNumber evidence="1">5.2.1.8</ecNumber>
    </recommendedName>
    <alternativeName>
        <fullName evidence="1">PPIase</fullName>
    </alternativeName>
</protein>
<dbReference type="EC" id="5.2.1.8" evidence="1"/>
<dbReference type="EMBL" id="AE008923">
    <property type="protein sequence ID" value="AAM35955.1"/>
    <property type="molecule type" value="Genomic_DNA"/>
</dbReference>
<dbReference type="RefSeq" id="WP_011050693.1">
    <property type="nucleotide sequence ID" value="NC_003919.1"/>
</dbReference>
<dbReference type="SMR" id="Q8PNI6"/>
<dbReference type="GeneID" id="66910255"/>
<dbReference type="KEGG" id="xac:XAC1077"/>
<dbReference type="eggNOG" id="COG0544">
    <property type="taxonomic scope" value="Bacteria"/>
</dbReference>
<dbReference type="HOGENOM" id="CLU_033058_2_0_6"/>
<dbReference type="Proteomes" id="UP000000576">
    <property type="component" value="Chromosome"/>
</dbReference>
<dbReference type="GO" id="GO:0005737">
    <property type="term" value="C:cytoplasm"/>
    <property type="evidence" value="ECO:0007669"/>
    <property type="project" value="UniProtKB-SubCell"/>
</dbReference>
<dbReference type="GO" id="GO:0003755">
    <property type="term" value="F:peptidyl-prolyl cis-trans isomerase activity"/>
    <property type="evidence" value="ECO:0007669"/>
    <property type="project" value="UniProtKB-UniRule"/>
</dbReference>
<dbReference type="GO" id="GO:0044183">
    <property type="term" value="F:protein folding chaperone"/>
    <property type="evidence" value="ECO:0007669"/>
    <property type="project" value="TreeGrafter"/>
</dbReference>
<dbReference type="GO" id="GO:0043022">
    <property type="term" value="F:ribosome binding"/>
    <property type="evidence" value="ECO:0007669"/>
    <property type="project" value="TreeGrafter"/>
</dbReference>
<dbReference type="GO" id="GO:0051083">
    <property type="term" value="P:'de novo' cotranslational protein folding"/>
    <property type="evidence" value="ECO:0007669"/>
    <property type="project" value="TreeGrafter"/>
</dbReference>
<dbReference type="GO" id="GO:0051301">
    <property type="term" value="P:cell division"/>
    <property type="evidence" value="ECO:0007669"/>
    <property type="project" value="UniProtKB-KW"/>
</dbReference>
<dbReference type="GO" id="GO:0061077">
    <property type="term" value="P:chaperone-mediated protein folding"/>
    <property type="evidence" value="ECO:0007669"/>
    <property type="project" value="TreeGrafter"/>
</dbReference>
<dbReference type="GO" id="GO:0015031">
    <property type="term" value="P:protein transport"/>
    <property type="evidence" value="ECO:0007669"/>
    <property type="project" value="UniProtKB-UniRule"/>
</dbReference>
<dbReference type="GO" id="GO:0043335">
    <property type="term" value="P:protein unfolding"/>
    <property type="evidence" value="ECO:0007669"/>
    <property type="project" value="TreeGrafter"/>
</dbReference>
<dbReference type="Gene3D" id="3.10.50.40">
    <property type="match status" value="1"/>
</dbReference>
<dbReference type="Gene3D" id="3.30.70.1050">
    <property type="entry name" value="Trigger factor ribosome-binding domain"/>
    <property type="match status" value="1"/>
</dbReference>
<dbReference type="Gene3D" id="1.10.3120.10">
    <property type="entry name" value="Trigger factor, C-terminal domain"/>
    <property type="match status" value="1"/>
</dbReference>
<dbReference type="HAMAP" id="MF_00303">
    <property type="entry name" value="Trigger_factor_Tig"/>
    <property type="match status" value="1"/>
</dbReference>
<dbReference type="InterPro" id="IPR046357">
    <property type="entry name" value="PPIase_dom_sf"/>
</dbReference>
<dbReference type="InterPro" id="IPR005215">
    <property type="entry name" value="Trig_fac"/>
</dbReference>
<dbReference type="InterPro" id="IPR008880">
    <property type="entry name" value="Trigger_fac_C"/>
</dbReference>
<dbReference type="InterPro" id="IPR037041">
    <property type="entry name" value="Trigger_fac_C_sf"/>
</dbReference>
<dbReference type="InterPro" id="IPR008881">
    <property type="entry name" value="Trigger_fac_ribosome-bd_bac"/>
</dbReference>
<dbReference type="InterPro" id="IPR036611">
    <property type="entry name" value="Trigger_fac_ribosome-bd_sf"/>
</dbReference>
<dbReference type="InterPro" id="IPR027304">
    <property type="entry name" value="Trigger_fact/SurA_dom_sf"/>
</dbReference>
<dbReference type="NCBIfam" id="TIGR00115">
    <property type="entry name" value="tig"/>
    <property type="match status" value="1"/>
</dbReference>
<dbReference type="PANTHER" id="PTHR30560">
    <property type="entry name" value="TRIGGER FACTOR CHAPERONE AND PEPTIDYL-PROLYL CIS/TRANS ISOMERASE"/>
    <property type="match status" value="1"/>
</dbReference>
<dbReference type="PANTHER" id="PTHR30560:SF3">
    <property type="entry name" value="TRIGGER FACTOR-LIKE PROTEIN TIG, CHLOROPLASTIC"/>
    <property type="match status" value="1"/>
</dbReference>
<dbReference type="Pfam" id="PF05698">
    <property type="entry name" value="Trigger_C"/>
    <property type="match status" value="1"/>
</dbReference>
<dbReference type="Pfam" id="PF05697">
    <property type="entry name" value="Trigger_N"/>
    <property type="match status" value="1"/>
</dbReference>
<dbReference type="PIRSF" id="PIRSF003095">
    <property type="entry name" value="Trigger_factor"/>
    <property type="match status" value="1"/>
</dbReference>
<dbReference type="SUPFAM" id="SSF54534">
    <property type="entry name" value="FKBP-like"/>
    <property type="match status" value="1"/>
</dbReference>
<dbReference type="SUPFAM" id="SSF109998">
    <property type="entry name" value="Triger factor/SurA peptide-binding domain-like"/>
    <property type="match status" value="1"/>
</dbReference>
<dbReference type="SUPFAM" id="SSF102735">
    <property type="entry name" value="Trigger factor ribosome-binding domain"/>
    <property type="match status" value="1"/>
</dbReference>
<sequence length="430" mass="48246">MQASIESTGNLERRLTFTLPQERLETHVGGRLRELARTTRIKGFRPGKVPTKVIEQRFGQQVRAEAMEGLLRETFDSAVREHSLRLAGNPRIDQGETDFDFVATFEVVPDFGDIDVTKLSVVRATAEVTDADIDQMIENLRLQRRTWNPVERGAQVGDLVALETWSQAGDERLPAEGVETGSSVLGSGVMFDQIEKGLEGLTKGEEKTLTVDFPAEWRVPQLAGKTVQVHVKAVEVSEPVLPAVDKDFIKSFGVKSGDAEQFRADIRTNLERELKGALMNRLRREVGEQLIAAYAHVEMPPRLVESEARSMLAQQVEQVRRSGRDPGQVPADAHQGFMDAAAKRVLVGLLVGEVARRNELRLESKRVSETLRLIASTYEEPEQVIEMYRNDPQLMNGLQSRVMEEQVIDWIAERAQHTEQSLSFQDAIRV</sequence>
<accession>Q8PNI6</accession>
<name>TIG_XANAC</name>